<geneLocation type="chloroplast"/>
<evidence type="ECO:0000255" key="1">
    <source>
        <dbReference type="HAMAP-Rule" id="MF_00642"/>
    </source>
</evidence>
<name>PSBE_EUCGG</name>
<organism>
    <name type="scientific">Eucalyptus globulus subsp. globulus</name>
    <name type="common">Tasmanian blue gum</name>
    <dbReference type="NCBI Taxonomy" id="71271"/>
    <lineage>
        <taxon>Eukaryota</taxon>
        <taxon>Viridiplantae</taxon>
        <taxon>Streptophyta</taxon>
        <taxon>Embryophyta</taxon>
        <taxon>Tracheophyta</taxon>
        <taxon>Spermatophyta</taxon>
        <taxon>Magnoliopsida</taxon>
        <taxon>eudicotyledons</taxon>
        <taxon>Gunneridae</taxon>
        <taxon>Pentapetalae</taxon>
        <taxon>rosids</taxon>
        <taxon>malvids</taxon>
        <taxon>Myrtales</taxon>
        <taxon>Myrtaceae</taxon>
        <taxon>Myrtoideae</taxon>
        <taxon>Eucalypteae</taxon>
        <taxon>Eucalyptus</taxon>
    </lineage>
</organism>
<gene>
    <name evidence="1" type="primary">psbE</name>
</gene>
<feature type="chain" id="PRO_0000233202" description="Cytochrome b559 subunit alpha">
    <location>
        <begin position="1"/>
        <end position="83"/>
    </location>
</feature>
<feature type="transmembrane region" description="Helical" evidence="1">
    <location>
        <begin position="21"/>
        <end position="35"/>
    </location>
</feature>
<feature type="binding site" description="axial binding residue" evidence="1">
    <location>
        <position position="23"/>
    </location>
    <ligand>
        <name>heme</name>
        <dbReference type="ChEBI" id="CHEBI:30413"/>
        <note>ligand shared with beta subunit</note>
    </ligand>
    <ligandPart>
        <name>Fe</name>
        <dbReference type="ChEBI" id="CHEBI:18248"/>
    </ligandPart>
</feature>
<keyword id="KW-0150">Chloroplast</keyword>
<keyword id="KW-0249">Electron transport</keyword>
<keyword id="KW-0349">Heme</keyword>
<keyword id="KW-0408">Iron</keyword>
<keyword id="KW-0472">Membrane</keyword>
<keyword id="KW-0479">Metal-binding</keyword>
<keyword id="KW-0602">Photosynthesis</keyword>
<keyword id="KW-0604">Photosystem II</keyword>
<keyword id="KW-0934">Plastid</keyword>
<keyword id="KW-0793">Thylakoid</keyword>
<keyword id="KW-0812">Transmembrane</keyword>
<keyword id="KW-1133">Transmembrane helix</keyword>
<keyword id="KW-0813">Transport</keyword>
<accession>Q49KY2</accession>
<sequence>MSGSTGERSFADIITSIRYWVIHSITIPSLFIAGWLFVSTGLAYDVFGSPRPNEYFTESRQGIPLITGRFDPLEQLDEFSRSF</sequence>
<comment type="function">
    <text evidence="1">This b-type cytochrome is tightly associated with the reaction center of photosystem II (PSII). PSII is a light-driven water:plastoquinone oxidoreductase that uses light energy to abstract electrons from H(2)O, generating O(2) and a proton gradient subsequently used for ATP formation. It consists of a core antenna complex that captures photons, and an electron transfer chain that converts photonic excitation into a charge separation.</text>
</comment>
<comment type="cofactor">
    <cofactor evidence="1">
        <name>heme b</name>
        <dbReference type="ChEBI" id="CHEBI:60344"/>
    </cofactor>
    <text evidence="1">With its partner (PsbF) binds heme. PSII binds additional chlorophylls, carotenoids and specific lipids.</text>
</comment>
<comment type="subunit">
    <text evidence="1">Heterodimer of an alpha subunit and a beta subunit. PSII is composed of 1 copy each of membrane proteins PsbA, PsbB, PsbC, PsbD, PsbE, PsbF, PsbH, PsbI, PsbJ, PsbK, PsbL, PsbM, PsbT, PsbX, PsbY, PsbZ, Psb30/Ycf12, at least 3 peripheral proteins of the oxygen-evolving complex and a large number of cofactors. It forms dimeric complexes.</text>
</comment>
<comment type="subcellular location">
    <subcellularLocation>
        <location evidence="1">Plastid</location>
        <location evidence="1">Chloroplast thylakoid membrane</location>
        <topology evidence="1">Single-pass membrane protein</topology>
    </subcellularLocation>
</comment>
<comment type="similarity">
    <text evidence="1">Belongs to the PsbE/PsbF family.</text>
</comment>
<protein>
    <recommendedName>
        <fullName evidence="1">Cytochrome b559 subunit alpha</fullName>
    </recommendedName>
    <alternativeName>
        <fullName evidence="1">PSII reaction center subunit V</fullName>
    </alternativeName>
</protein>
<proteinExistence type="inferred from homology"/>
<reference key="1">
    <citation type="journal article" date="2005" name="DNA Res.">
        <title>Complete nucleotide sequence of the chloroplast genome from the Tasmanian blue gum, Eucalyptus globulus (Myrtaceae).</title>
        <authorList>
            <person name="Steane D.A."/>
        </authorList>
    </citation>
    <scope>NUCLEOTIDE SEQUENCE [LARGE SCALE GENOMIC DNA]</scope>
</reference>
<dbReference type="EMBL" id="AY780259">
    <property type="protein sequence ID" value="AAX21045.1"/>
    <property type="molecule type" value="Genomic_DNA"/>
</dbReference>
<dbReference type="RefSeq" id="YP_636315.1">
    <property type="nucleotide sequence ID" value="NC_008115.1"/>
</dbReference>
<dbReference type="SMR" id="Q49KY2"/>
<dbReference type="GeneID" id="4108399"/>
<dbReference type="GO" id="GO:0009535">
    <property type="term" value="C:chloroplast thylakoid membrane"/>
    <property type="evidence" value="ECO:0007669"/>
    <property type="project" value="UniProtKB-SubCell"/>
</dbReference>
<dbReference type="GO" id="GO:0009539">
    <property type="term" value="C:photosystem II reaction center"/>
    <property type="evidence" value="ECO:0007669"/>
    <property type="project" value="InterPro"/>
</dbReference>
<dbReference type="GO" id="GO:0009055">
    <property type="term" value="F:electron transfer activity"/>
    <property type="evidence" value="ECO:0007669"/>
    <property type="project" value="UniProtKB-UniRule"/>
</dbReference>
<dbReference type="GO" id="GO:0020037">
    <property type="term" value="F:heme binding"/>
    <property type="evidence" value="ECO:0007669"/>
    <property type="project" value="InterPro"/>
</dbReference>
<dbReference type="GO" id="GO:0005506">
    <property type="term" value="F:iron ion binding"/>
    <property type="evidence" value="ECO:0007669"/>
    <property type="project" value="UniProtKB-UniRule"/>
</dbReference>
<dbReference type="GO" id="GO:0009767">
    <property type="term" value="P:photosynthetic electron transport chain"/>
    <property type="evidence" value="ECO:0007669"/>
    <property type="project" value="InterPro"/>
</dbReference>
<dbReference type="Gene3D" id="1.20.5.860">
    <property type="entry name" value="Photosystem II cytochrome b559, alpha subunit"/>
    <property type="match status" value="1"/>
</dbReference>
<dbReference type="HAMAP" id="MF_00642">
    <property type="entry name" value="PSII_PsbE"/>
    <property type="match status" value="1"/>
</dbReference>
<dbReference type="InterPro" id="IPR006217">
    <property type="entry name" value="PSII_cyt_b559_asu"/>
</dbReference>
<dbReference type="InterPro" id="IPR037025">
    <property type="entry name" value="PSII_cyt_b559_asu_sf"/>
</dbReference>
<dbReference type="InterPro" id="IPR006216">
    <property type="entry name" value="PSII_cyt_b559_CS"/>
</dbReference>
<dbReference type="InterPro" id="IPR013081">
    <property type="entry name" value="PSII_cyt_b559_N"/>
</dbReference>
<dbReference type="InterPro" id="IPR013082">
    <property type="entry name" value="PSII_cytb559_asu_lum"/>
</dbReference>
<dbReference type="NCBIfam" id="TIGR01332">
    <property type="entry name" value="cyt_b559_alpha"/>
    <property type="match status" value="1"/>
</dbReference>
<dbReference type="PANTHER" id="PTHR33391">
    <property type="entry name" value="CYTOCHROME B559 SUBUNIT BETA-RELATED"/>
    <property type="match status" value="1"/>
</dbReference>
<dbReference type="PANTHER" id="PTHR33391:SF9">
    <property type="entry name" value="CYTOCHROME B559 SUBUNIT BETA-RELATED"/>
    <property type="match status" value="1"/>
</dbReference>
<dbReference type="Pfam" id="PF00283">
    <property type="entry name" value="Cytochrom_B559"/>
    <property type="match status" value="1"/>
</dbReference>
<dbReference type="Pfam" id="PF00284">
    <property type="entry name" value="Cytochrom_B559a"/>
    <property type="match status" value="1"/>
</dbReference>
<dbReference type="PIRSF" id="PIRSF000036">
    <property type="entry name" value="PsbE"/>
    <property type="match status" value="1"/>
</dbReference>
<dbReference type="SUPFAM" id="SSF161045">
    <property type="entry name" value="Cytochrome b559 subunits"/>
    <property type="match status" value="1"/>
</dbReference>
<dbReference type="PROSITE" id="PS00537">
    <property type="entry name" value="CYTOCHROME_B559"/>
    <property type="match status" value="1"/>
</dbReference>